<keyword id="KW-0067">ATP-binding</keyword>
<keyword id="KW-0963">Cytoplasm</keyword>
<keyword id="KW-0418">Kinase</keyword>
<keyword id="KW-0479">Metal-binding</keyword>
<keyword id="KW-0545">Nucleotide biosynthesis</keyword>
<keyword id="KW-0547">Nucleotide-binding</keyword>
<keyword id="KW-0808">Transferase</keyword>
<keyword id="KW-0862">Zinc</keyword>
<feature type="chain" id="PRO_1000100617" description="Adenylate kinase">
    <location>
        <begin position="1"/>
        <end position="224"/>
    </location>
</feature>
<feature type="region of interest" description="NMP" evidence="1">
    <location>
        <begin position="30"/>
        <end position="59"/>
    </location>
</feature>
<feature type="region of interest" description="LID" evidence="1">
    <location>
        <begin position="124"/>
        <end position="161"/>
    </location>
</feature>
<feature type="binding site" evidence="1">
    <location>
        <begin position="10"/>
        <end position="15"/>
    </location>
    <ligand>
        <name>ATP</name>
        <dbReference type="ChEBI" id="CHEBI:30616"/>
    </ligand>
</feature>
<feature type="binding site" evidence="1">
    <location>
        <position position="31"/>
    </location>
    <ligand>
        <name>AMP</name>
        <dbReference type="ChEBI" id="CHEBI:456215"/>
    </ligand>
</feature>
<feature type="binding site" evidence="1">
    <location>
        <position position="36"/>
    </location>
    <ligand>
        <name>AMP</name>
        <dbReference type="ChEBI" id="CHEBI:456215"/>
    </ligand>
</feature>
<feature type="binding site" evidence="1">
    <location>
        <begin position="57"/>
        <end position="59"/>
    </location>
    <ligand>
        <name>AMP</name>
        <dbReference type="ChEBI" id="CHEBI:456215"/>
    </ligand>
</feature>
<feature type="binding site" evidence="1">
    <location>
        <begin position="83"/>
        <end position="86"/>
    </location>
    <ligand>
        <name>AMP</name>
        <dbReference type="ChEBI" id="CHEBI:456215"/>
    </ligand>
</feature>
<feature type="binding site" evidence="1">
    <location>
        <position position="90"/>
    </location>
    <ligand>
        <name>AMP</name>
        <dbReference type="ChEBI" id="CHEBI:456215"/>
    </ligand>
</feature>
<feature type="binding site" evidence="1">
    <location>
        <position position="125"/>
    </location>
    <ligand>
        <name>ATP</name>
        <dbReference type="ChEBI" id="CHEBI:30616"/>
    </ligand>
</feature>
<feature type="binding site" evidence="1">
    <location>
        <position position="128"/>
    </location>
    <ligand>
        <name>Zn(2+)</name>
        <dbReference type="ChEBI" id="CHEBI:29105"/>
        <note>structural</note>
    </ligand>
</feature>
<feature type="binding site" evidence="1">
    <location>
        <position position="131"/>
    </location>
    <ligand>
        <name>Zn(2+)</name>
        <dbReference type="ChEBI" id="CHEBI:29105"/>
        <note>structural</note>
    </ligand>
</feature>
<feature type="binding site" evidence="1">
    <location>
        <begin position="134"/>
        <end position="135"/>
    </location>
    <ligand>
        <name>ATP</name>
        <dbReference type="ChEBI" id="CHEBI:30616"/>
    </ligand>
</feature>
<feature type="binding site" evidence="1">
    <location>
        <position position="148"/>
    </location>
    <ligand>
        <name>Zn(2+)</name>
        <dbReference type="ChEBI" id="CHEBI:29105"/>
        <note>structural</note>
    </ligand>
</feature>
<feature type="binding site" evidence="1">
    <location>
        <position position="151"/>
    </location>
    <ligand>
        <name>Zn(2+)</name>
        <dbReference type="ChEBI" id="CHEBI:29105"/>
        <note>structural</note>
    </ligand>
</feature>
<feature type="binding site" evidence="1">
    <location>
        <position position="158"/>
    </location>
    <ligand>
        <name>AMP</name>
        <dbReference type="ChEBI" id="CHEBI:456215"/>
    </ligand>
</feature>
<feature type="binding site" evidence="1">
    <location>
        <position position="169"/>
    </location>
    <ligand>
        <name>AMP</name>
        <dbReference type="ChEBI" id="CHEBI:456215"/>
    </ligand>
</feature>
<feature type="binding site" evidence="1">
    <location>
        <position position="197"/>
    </location>
    <ligand>
        <name>ATP</name>
        <dbReference type="ChEBI" id="CHEBI:30616"/>
    </ligand>
</feature>
<accession>B6YVU5</accession>
<organism>
    <name type="scientific">Thermococcus onnurineus (strain NA1)</name>
    <dbReference type="NCBI Taxonomy" id="523850"/>
    <lineage>
        <taxon>Archaea</taxon>
        <taxon>Methanobacteriati</taxon>
        <taxon>Methanobacteriota</taxon>
        <taxon>Thermococci</taxon>
        <taxon>Thermococcales</taxon>
        <taxon>Thermococcaceae</taxon>
        <taxon>Thermococcus</taxon>
    </lineage>
</organism>
<protein>
    <recommendedName>
        <fullName evidence="1">Adenylate kinase</fullName>
        <shortName evidence="1">AK</shortName>
        <ecNumber evidence="1">2.7.4.3</ecNumber>
    </recommendedName>
    <alternativeName>
        <fullName evidence="1">ATP-AMP transphosphorylase</fullName>
    </alternativeName>
    <alternativeName>
        <fullName evidence="1">ATP:AMP phosphotransferase</fullName>
    </alternativeName>
    <alternativeName>
        <fullName evidence="1">Adenylate monophosphate kinase</fullName>
    </alternativeName>
</protein>
<evidence type="ECO:0000255" key="1">
    <source>
        <dbReference type="HAMAP-Rule" id="MF_00235"/>
    </source>
</evidence>
<name>KAD_THEON</name>
<reference key="1">
    <citation type="journal article" date="2008" name="J. Bacteriol.">
        <title>The complete genome sequence of Thermococcus onnurineus NA1 reveals a mixed heterotrophic and carboxydotrophic metabolism.</title>
        <authorList>
            <person name="Lee H.S."/>
            <person name="Kang S.G."/>
            <person name="Bae S.S."/>
            <person name="Lim J.K."/>
            <person name="Cho Y."/>
            <person name="Kim Y.J."/>
            <person name="Jeon J.H."/>
            <person name="Cha S.-S."/>
            <person name="Kwon K.K."/>
            <person name="Kim H.-T."/>
            <person name="Park C.-J."/>
            <person name="Lee H.-W."/>
            <person name="Kim S.I."/>
            <person name="Chun J."/>
            <person name="Colwell R.R."/>
            <person name="Kim S.-J."/>
            <person name="Lee J.-H."/>
        </authorList>
    </citation>
    <scope>NUCLEOTIDE SEQUENCE [LARGE SCALE GENOMIC DNA]</scope>
    <source>
        <strain>NA1</strain>
    </source>
</reference>
<proteinExistence type="inferred from homology"/>
<sequence>MNILIFGPPGSGKSTHSRTITERYGLTYISSGDMIRAEIEKGSELGKELKKYLAKGELIPDIVVNTLVISRLRRDRNNFIIDGYPRTAEQVLALENYLYDHGIRIDVAMEIFISKEESVERISGRRICPKCGAVYHLRYRPPKVPGKCDLCGSQLIQREDDRSEIVAKRYDLYVKNMEPIIKFYKKQGIYVRVDGHGSINEVWERIRPLLDYIHNREKKRKENE</sequence>
<gene>
    <name evidence="1" type="primary">adk</name>
    <name type="ordered locus">TON_0780</name>
</gene>
<comment type="function">
    <text evidence="1">Catalyzes the reversible transfer of the terminal phosphate group between ATP and AMP. Plays an important role in cellular energy homeostasis and in adenine nucleotide metabolism.</text>
</comment>
<comment type="catalytic activity">
    <reaction evidence="1">
        <text>AMP + ATP = 2 ADP</text>
        <dbReference type="Rhea" id="RHEA:12973"/>
        <dbReference type="ChEBI" id="CHEBI:30616"/>
        <dbReference type="ChEBI" id="CHEBI:456215"/>
        <dbReference type="ChEBI" id="CHEBI:456216"/>
        <dbReference type="EC" id="2.7.4.3"/>
    </reaction>
</comment>
<comment type="pathway">
    <text evidence="1">Purine metabolism; AMP biosynthesis via salvage pathway; AMP from ADP: step 1/1.</text>
</comment>
<comment type="subunit">
    <text evidence="1">Monomer.</text>
</comment>
<comment type="subcellular location">
    <subcellularLocation>
        <location evidence="1">Cytoplasm</location>
    </subcellularLocation>
</comment>
<comment type="domain">
    <text evidence="1">Consists of three domains, a large central CORE domain and two small peripheral domains, NMPbind and LID, which undergo movements during catalysis. The LID domain closes over the site of phosphoryl transfer upon ATP binding. Assembling and dissambling the active center during each catalytic cycle provides an effective means to prevent ATP hydrolysis. Some bacteria have evolved a zinc-coordinating structure that stabilizes the LID domain.</text>
</comment>
<comment type="similarity">
    <text evidence="1">Belongs to the adenylate kinase family.</text>
</comment>
<dbReference type="EC" id="2.7.4.3" evidence="1"/>
<dbReference type="EMBL" id="CP000855">
    <property type="protein sequence ID" value="ACJ16268.1"/>
    <property type="molecule type" value="Genomic_DNA"/>
</dbReference>
<dbReference type="RefSeq" id="WP_012571740.1">
    <property type="nucleotide sequence ID" value="NC_011529.1"/>
</dbReference>
<dbReference type="SMR" id="B6YVU5"/>
<dbReference type="STRING" id="523850.TON_0780"/>
<dbReference type="GeneID" id="7017083"/>
<dbReference type="KEGG" id="ton:TON_0780"/>
<dbReference type="PATRIC" id="fig|523850.10.peg.786"/>
<dbReference type="eggNOG" id="arCOG01046">
    <property type="taxonomic scope" value="Archaea"/>
</dbReference>
<dbReference type="HOGENOM" id="CLU_032354_1_2_2"/>
<dbReference type="OrthoDB" id="31230at2157"/>
<dbReference type="UniPathway" id="UPA00588">
    <property type="reaction ID" value="UER00649"/>
</dbReference>
<dbReference type="Proteomes" id="UP000002727">
    <property type="component" value="Chromosome"/>
</dbReference>
<dbReference type="GO" id="GO:0005737">
    <property type="term" value="C:cytoplasm"/>
    <property type="evidence" value="ECO:0007669"/>
    <property type="project" value="UniProtKB-SubCell"/>
</dbReference>
<dbReference type="GO" id="GO:0004017">
    <property type="term" value="F:adenylate kinase activity"/>
    <property type="evidence" value="ECO:0007669"/>
    <property type="project" value="UniProtKB-UniRule"/>
</dbReference>
<dbReference type="GO" id="GO:0005524">
    <property type="term" value="F:ATP binding"/>
    <property type="evidence" value="ECO:0007669"/>
    <property type="project" value="UniProtKB-UniRule"/>
</dbReference>
<dbReference type="GO" id="GO:0008270">
    <property type="term" value="F:zinc ion binding"/>
    <property type="evidence" value="ECO:0007669"/>
    <property type="project" value="UniProtKB-UniRule"/>
</dbReference>
<dbReference type="GO" id="GO:0044209">
    <property type="term" value="P:AMP salvage"/>
    <property type="evidence" value="ECO:0007669"/>
    <property type="project" value="UniProtKB-UniRule"/>
</dbReference>
<dbReference type="CDD" id="cd01428">
    <property type="entry name" value="ADK"/>
    <property type="match status" value="1"/>
</dbReference>
<dbReference type="FunFam" id="3.40.50.300:FF:000106">
    <property type="entry name" value="Adenylate kinase mitochondrial"/>
    <property type="match status" value="1"/>
</dbReference>
<dbReference type="Gene3D" id="3.40.50.300">
    <property type="entry name" value="P-loop containing nucleotide triphosphate hydrolases"/>
    <property type="match status" value="1"/>
</dbReference>
<dbReference type="HAMAP" id="MF_00235">
    <property type="entry name" value="Adenylate_kinase_Adk"/>
    <property type="match status" value="1"/>
</dbReference>
<dbReference type="InterPro" id="IPR006259">
    <property type="entry name" value="Adenyl_kin_sub"/>
</dbReference>
<dbReference type="InterPro" id="IPR000850">
    <property type="entry name" value="Adenylat/UMP-CMP_kin"/>
</dbReference>
<dbReference type="InterPro" id="IPR033690">
    <property type="entry name" value="Adenylat_kinase_CS"/>
</dbReference>
<dbReference type="InterPro" id="IPR007862">
    <property type="entry name" value="Adenylate_kinase_lid-dom"/>
</dbReference>
<dbReference type="InterPro" id="IPR027417">
    <property type="entry name" value="P-loop_NTPase"/>
</dbReference>
<dbReference type="NCBIfam" id="TIGR01351">
    <property type="entry name" value="adk"/>
    <property type="match status" value="1"/>
</dbReference>
<dbReference type="NCBIfam" id="NF001387">
    <property type="entry name" value="PRK00279.2-5"/>
    <property type="match status" value="1"/>
</dbReference>
<dbReference type="PANTHER" id="PTHR23359">
    <property type="entry name" value="NUCLEOTIDE KINASE"/>
    <property type="match status" value="1"/>
</dbReference>
<dbReference type="Pfam" id="PF00406">
    <property type="entry name" value="ADK"/>
    <property type="match status" value="1"/>
</dbReference>
<dbReference type="Pfam" id="PF05191">
    <property type="entry name" value="ADK_lid"/>
    <property type="match status" value="1"/>
</dbReference>
<dbReference type="PRINTS" id="PR00094">
    <property type="entry name" value="ADENYLTKNASE"/>
</dbReference>
<dbReference type="SUPFAM" id="SSF52540">
    <property type="entry name" value="P-loop containing nucleoside triphosphate hydrolases"/>
    <property type="match status" value="1"/>
</dbReference>
<dbReference type="PROSITE" id="PS00113">
    <property type="entry name" value="ADENYLATE_KINASE"/>
    <property type="match status" value="1"/>
</dbReference>